<gene>
    <name type="primary">V-SRC</name>
</gene>
<proteinExistence type="evidence at protein level"/>
<feature type="initiator methionine" description="Removed; by host" evidence="1">
    <location>
        <position position="1"/>
    </location>
</feature>
<feature type="chain" id="PRO_0000088153" description="Tyrosine-protein kinase transforming protein Src">
    <location>
        <begin position="2"/>
        <end position="526"/>
    </location>
</feature>
<feature type="domain" description="SH3" evidence="5">
    <location>
        <begin position="81"/>
        <end position="142"/>
    </location>
</feature>
<feature type="domain" description="SH2" evidence="4">
    <location>
        <begin position="148"/>
        <end position="245"/>
    </location>
</feature>
<feature type="domain" description="Protein kinase" evidence="3">
    <location>
        <begin position="267"/>
        <end position="517"/>
    </location>
</feature>
<feature type="region of interest" description="Disordered" evidence="7">
    <location>
        <begin position="1"/>
        <end position="57"/>
    </location>
</feature>
<feature type="compositionally biased region" description="Basic and acidic residues" evidence="7">
    <location>
        <begin position="7"/>
        <end position="25"/>
    </location>
</feature>
<feature type="active site" description="Proton acceptor" evidence="3 6">
    <location>
        <position position="386"/>
    </location>
</feature>
<feature type="binding site" evidence="3">
    <location>
        <begin position="273"/>
        <end position="281"/>
    </location>
    <ligand>
        <name>ATP</name>
        <dbReference type="ChEBI" id="CHEBI:30616"/>
    </ligand>
</feature>
<feature type="binding site" evidence="3">
    <location>
        <position position="295"/>
    </location>
    <ligand>
        <name>ATP</name>
        <dbReference type="ChEBI" id="CHEBI:30616"/>
    </ligand>
</feature>
<feature type="modified residue" description="Phosphotyrosine; by autocatalysis" evidence="9">
    <location>
        <position position="416"/>
    </location>
</feature>
<feature type="lipid moiety-binding region" description="N-myristoyl glycine; by host" evidence="2">
    <location>
        <position position="2"/>
    </location>
</feature>
<feature type="strand" evidence="11">
    <location>
        <begin position="149"/>
        <end position="152"/>
    </location>
</feature>
<feature type="helix" evidence="11">
    <location>
        <begin position="155"/>
        <end position="162"/>
    </location>
</feature>
<feature type="strand" evidence="11">
    <location>
        <begin position="172"/>
        <end position="176"/>
    </location>
</feature>
<feature type="strand" evidence="11">
    <location>
        <begin position="178"/>
        <end position="180"/>
    </location>
</feature>
<feature type="strand" evidence="11">
    <location>
        <begin position="184"/>
        <end position="192"/>
    </location>
</feature>
<feature type="turn" evidence="11">
    <location>
        <begin position="193"/>
        <end position="195"/>
    </location>
</feature>
<feature type="strand" evidence="11">
    <location>
        <begin position="196"/>
        <end position="206"/>
    </location>
</feature>
<feature type="strand" evidence="10">
    <location>
        <begin position="208"/>
        <end position="210"/>
    </location>
</feature>
<feature type="strand" evidence="11">
    <location>
        <begin position="212"/>
        <end position="215"/>
    </location>
</feature>
<feature type="strand" evidence="11">
    <location>
        <begin position="219"/>
        <end position="222"/>
    </location>
</feature>
<feature type="helix" evidence="11">
    <location>
        <begin position="223"/>
        <end position="230"/>
    </location>
</feature>
<feature type="strand" evidence="11">
    <location>
        <begin position="237"/>
        <end position="239"/>
    </location>
</feature>
<dbReference type="EC" id="2.7.10.2"/>
<dbReference type="EMBL" id="L29199">
    <property type="protein sequence ID" value="AAA42563.1"/>
    <property type="molecule type" value="Genomic_DNA"/>
</dbReference>
<dbReference type="EMBL" id="V01169">
    <property type="protein sequence ID" value="CAA24495.1"/>
    <property type="molecule type" value="Genomic_RNA"/>
</dbReference>
<dbReference type="PIR" id="A38017">
    <property type="entry name" value="TVFV60"/>
</dbReference>
<dbReference type="PDB" id="1BKL">
    <property type="method" value="X-ray"/>
    <property type="resolution" value="2.10 A"/>
    <property type="chains" value="A=145-249"/>
</dbReference>
<dbReference type="PDB" id="1BKM">
    <property type="method" value="X-ray"/>
    <property type="resolution" value="2.00 A"/>
    <property type="chains" value="A=145-249"/>
</dbReference>
<dbReference type="PDB" id="1IS0">
    <property type="method" value="X-ray"/>
    <property type="resolution" value="1.90 A"/>
    <property type="chains" value="A/B=144-249"/>
</dbReference>
<dbReference type="PDB" id="1KC2">
    <property type="method" value="X-ray"/>
    <property type="resolution" value="2.10 A"/>
    <property type="chains" value="A=145-247"/>
</dbReference>
<dbReference type="PDB" id="1NZL">
    <property type="method" value="X-ray"/>
    <property type="resolution" value="1.90 A"/>
    <property type="chains" value="A/B=145-247"/>
</dbReference>
<dbReference type="PDB" id="1NZV">
    <property type="method" value="X-ray"/>
    <property type="resolution" value="2.10 A"/>
    <property type="chains" value="A/B=145-247"/>
</dbReference>
<dbReference type="PDB" id="1SHA">
    <property type="method" value="X-ray"/>
    <property type="resolution" value="1.50 A"/>
    <property type="chains" value="A=144-247"/>
</dbReference>
<dbReference type="PDB" id="1SHB">
    <property type="method" value="X-ray"/>
    <property type="resolution" value="2.00 A"/>
    <property type="chains" value="A=144-247"/>
</dbReference>
<dbReference type="PDB" id="1SKJ">
    <property type="method" value="X-ray"/>
    <property type="resolution" value="2.00 A"/>
    <property type="chains" value="A=145-249"/>
</dbReference>
<dbReference type="PDB" id="1SPR">
    <property type="method" value="X-ray"/>
    <property type="resolution" value="2.50 A"/>
    <property type="chains" value="A/B/C/D=144-247"/>
</dbReference>
<dbReference type="PDB" id="1SPS">
    <property type="method" value="X-ray"/>
    <property type="resolution" value="2.70 A"/>
    <property type="chains" value="A/B/C=144-247"/>
</dbReference>
<dbReference type="PDBsum" id="1BKL"/>
<dbReference type="PDBsum" id="1BKM"/>
<dbReference type="PDBsum" id="1IS0"/>
<dbReference type="PDBsum" id="1KC2"/>
<dbReference type="PDBsum" id="1NZL"/>
<dbReference type="PDBsum" id="1NZV"/>
<dbReference type="PDBsum" id="1SHA"/>
<dbReference type="PDBsum" id="1SHB"/>
<dbReference type="PDBsum" id="1SKJ"/>
<dbReference type="PDBsum" id="1SPR"/>
<dbReference type="PDBsum" id="1SPS"/>
<dbReference type="BMRB" id="P00524"/>
<dbReference type="SMR" id="P00524"/>
<dbReference type="ELM" id="P00524"/>
<dbReference type="IntAct" id="P00524">
    <property type="interactions" value="4"/>
</dbReference>
<dbReference type="MINT" id="P00524"/>
<dbReference type="BindingDB" id="P00524"/>
<dbReference type="ChEMBL" id="CHEMBL4296300"/>
<dbReference type="DrugBank" id="DB08434">
    <property type="generic name" value="2-METHYLCARBAMOYL-3-(4-PHOSPHONOOXY-PHENYL)-CYCLOPROPANECARBOXYLIC ACID"/>
</dbReference>
<dbReference type="iPTMnet" id="P00524"/>
<dbReference type="EvolutionaryTrace" id="P00524"/>
<dbReference type="GO" id="GO:0005524">
    <property type="term" value="F:ATP binding"/>
    <property type="evidence" value="ECO:0007669"/>
    <property type="project" value="UniProtKB-KW"/>
</dbReference>
<dbReference type="GO" id="GO:0004715">
    <property type="term" value="F:non-membrane spanning protein tyrosine kinase activity"/>
    <property type="evidence" value="ECO:0007669"/>
    <property type="project" value="UniProtKB-EC"/>
</dbReference>
<dbReference type="CDD" id="cd10365">
    <property type="entry name" value="SH2_Src_Src"/>
    <property type="match status" value="1"/>
</dbReference>
<dbReference type="CDD" id="cd12008">
    <property type="entry name" value="SH3_Src"/>
    <property type="match status" value="1"/>
</dbReference>
<dbReference type="FunFam" id="1.10.510.10:FF:000553">
    <property type="entry name" value="Tyrosine-protein kinase"/>
    <property type="match status" value="1"/>
</dbReference>
<dbReference type="FunFam" id="3.30.200.20:FF:000016">
    <property type="entry name" value="Tyrosine-protein kinase"/>
    <property type="match status" value="1"/>
</dbReference>
<dbReference type="FunFam" id="3.30.505.10:FF:000001">
    <property type="entry name" value="Tyrosine-protein kinase"/>
    <property type="match status" value="1"/>
</dbReference>
<dbReference type="Gene3D" id="3.30.200.20">
    <property type="entry name" value="Phosphorylase Kinase, domain 1"/>
    <property type="match status" value="1"/>
</dbReference>
<dbReference type="Gene3D" id="3.30.505.10">
    <property type="entry name" value="SH2 domain"/>
    <property type="match status" value="1"/>
</dbReference>
<dbReference type="Gene3D" id="2.30.30.40">
    <property type="entry name" value="SH3 Domains"/>
    <property type="match status" value="1"/>
</dbReference>
<dbReference type="Gene3D" id="1.10.510.10">
    <property type="entry name" value="Transferase(Phosphotransferase) domain 1"/>
    <property type="match status" value="1"/>
</dbReference>
<dbReference type="InterPro" id="IPR011009">
    <property type="entry name" value="Kinase-like_dom_sf"/>
</dbReference>
<dbReference type="InterPro" id="IPR050198">
    <property type="entry name" value="Non-receptor_tyrosine_kinases"/>
</dbReference>
<dbReference type="InterPro" id="IPR000719">
    <property type="entry name" value="Prot_kinase_dom"/>
</dbReference>
<dbReference type="InterPro" id="IPR017441">
    <property type="entry name" value="Protein_kinase_ATP_BS"/>
</dbReference>
<dbReference type="InterPro" id="IPR001245">
    <property type="entry name" value="Ser-Thr/Tyr_kinase_cat_dom"/>
</dbReference>
<dbReference type="InterPro" id="IPR000980">
    <property type="entry name" value="SH2"/>
</dbReference>
<dbReference type="InterPro" id="IPR036860">
    <property type="entry name" value="SH2_dom_sf"/>
</dbReference>
<dbReference type="InterPro" id="IPR036028">
    <property type="entry name" value="SH3-like_dom_sf"/>
</dbReference>
<dbReference type="InterPro" id="IPR001452">
    <property type="entry name" value="SH3_domain"/>
</dbReference>
<dbReference type="InterPro" id="IPR008266">
    <property type="entry name" value="Tyr_kinase_AS"/>
</dbReference>
<dbReference type="InterPro" id="IPR020635">
    <property type="entry name" value="Tyr_kinase_cat_dom"/>
</dbReference>
<dbReference type="PANTHER" id="PTHR24418">
    <property type="entry name" value="TYROSINE-PROTEIN KINASE"/>
    <property type="match status" value="1"/>
</dbReference>
<dbReference type="Pfam" id="PF07714">
    <property type="entry name" value="PK_Tyr_Ser-Thr"/>
    <property type="match status" value="1"/>
</dbReference>
<dbReference type="Pfam" id="PF00017">
    <property type="entry name" value="SH2"/>
    <property type="match status" value="1"/>
</dbReference>
<dbReference type="Pfam" id="PF00018">
    <property type="entry name" value="SH3_1"/>
    <property type="match status" value="1"/>
</dbReference>
<dbReference type="PRINTS" id="PR00401">
    <property type="entry name" value="SH2DOMAIN"/>
</dbReference>
<dbReference type="PRINTS" id="PR00452">
    <property type="entry name" value="SH3DOMAIN"/>
</dbReference>
<dbReference type="PRINTS" id="PR00109">
    <property type="entry name" value="TYRKINASE"/>
</dbReference>
<dbReference type="SMART" id="SM00252">
    <property type="entry name" value="SH2"/>
    <property type="match status" value="1"/>
</dbReference>
<dbReference type="SMART" id="SM00326">
    <property type="entry name" value="SH3"/>
    <property type="match status" value="1"/>
</dbReference>
<dbReference type="SMART" id="SM00219">
    <property type="entry name" value="TyrKc"/>
    <property type="match status" value="1"/>
</dbReference>
<dbReference type="SUPFAM" id="SSF56112">
    <property type="entry name" value="Protein kinase-like (PK-like)"/>
    <property type="match status" value="1"/>
</dbReference>
<dbReference type="SUPFAM" id="SSF55550">
    <property type="entry name" value="SH2 domain"/>
    <property type="match status" value="1"/>
</dbReference>
<dbReference type="SUPFAM" id="SSF50044">
    <property type="entry name" value="SH3-domain"/>
    <property type="match status" value="1"/>
</dbReference>
<dbReference type="PROSITE" id="PS00107">
    <property type="entry name" value="PROTEIN_KINASE_ATP"/>
    <property type="match status" value="1"/>
</dbReference>
<dbReference type="PROSITE" id="PS50011">
    <property type="entry name" value="PROTEIN_KINASE_DOM"/>
    <property type="match status" value="1"/>
</dbReference>
<dbReference type="PROSITE" id="PS00109">
    <property type="entry name" value="PROTEIN_KINASE_TYR"/>
    <property type="match status" value="1"/>
</dbReference>
<dbReference type="PROSITE" id="PS50001">
    <property type="entry name" value="SH2"/>
    <property type="match status" value="1"/>
</dbReference>
<dbReference type="PROSITE" id="PS50002">
    <property type="entry name" value="SH3"/>
    <property type="match status" value="1"/>
</dbReference>
<evidence type="ECO:0000250" key="1"/>
<evidence type="ECO:0000250" key="2">
    <source>
        <dbReference type="UniProtKB" id="P00526"/>
    </source>
</evidence>
<evidence type="ECO:0000255" key="3">
    <source>
        <dbReference type="PROSITE-ProRule" id="PRU00159"/>
    </source>
</evidence>
<evidence type="ECO:0000255" key="4">
    <source>
        <dbReference type="PROSITE-ProRule" id="PRU00191"/>
    </source>
</evidence>
<evidence type="ECO:0000255" key="5">
    <source>
        <dbReference type="PROSITE-ProRule" id="PRU00192"/>
    </source>
</evidence>
<evidence type="ECO:0000255" key="6">
    <source>
        <dbReference type="PROSITE-ProRule" id="PRU10028"/>
    </source>
</evidence>
<evidence type="ECO:0000256" key="7">
    <source>
        <dbReference type="SAM" id="MobiDB-lite"/>
    </source>
</evidence>
<evidence type="ECO:0000269" key="8">
    <source>
    </source>
</evidence>
<evidence type="ECO:0000269" key="9">
    <source>
    </source>
</evidence>
<evidence type="ECO:0007829" key="10">
    <source>
        <dbReference type="PDB" id="1IS0"/>
    </source>
</evidence>
<evidence type="ECO:0007829" key="11">
    <source>
        <dbReference type="PDB" id="1SHA"/>
    </source>
</evidence>
<reference key="1">
    <citation type="journal article" date="1980" name="Nature">
        <title>Nucleotide sequence of an avian sarcoma virus oncogene (src) and proposed amino acid sequence for gene product.</title>
        <authorList>
            <person name="Czernilofsky A.P."/>
            <person name="Levinson A.D."/>
            <person name="Varmus H.E."/>
            <person name="Bishop J.M."/>
            <person name="Tischer E."/>
            <person name="Goodman H.M."/>
        </authorList>
    </citation>
    <scope>NUCLEOTIDE SEQUENCE</scope>
</reference>
<reference key="2">
    <citation type="journal article" date="1983" name="Nature">
        <title>Corrections to the nucleotide sequence of the src gene of Rous sarcoma virus.</title>
        <authorList>
            <person name="Czernilofsky A.P."/>
            <person name="Levinson A.D."/>
            <person name="Varmus H.E."/>
            <person name="Bishop J.M."/>
            <person name="Tischer E."/>
            <person name="Goodman H."/>
        </authorList>
    </citation>
    <scope>SEQUENCE REVISION</scope>
</reference>
<reference key="3">
    <citation type="journal article" date="1981" name="Nature">
        <title>Homologous tyrosine phosphorylation sites in transformation-specific gene products of distinct avian sarcoma viruses.</title>
        <authorList>
            <person name="Neil J.C."/>
            <person name="Ghysdael J."/>
            <person name="Vogt P.K."/>
            <person name="Smart J.E."/>
        </authorList>
    </citation>
    <scope>PHOSPHORYLATION AT TYR-416</scope>
</reference>
<reference key="4">
    <citation type="journal article" date="2018" name="J. Biol. Chem.">
        <title>The tyrosine kinase v-Src causes mitotic slippage by phosphorylating an inhibitory tyrosine residue of Cdk1.</title>
        <authorList>
            <person name="Horiuchi M."/>
            <person name="Kuga T."/>
            <person name="Saito Y."/>
            <person name="Nagano M."/>
            <person name="Adachi J."/>
            <person name="Tomonaga T."/>
            <person name="Yamaguchi N."/>
            <person name="Nakayama Y."/>
        </authorList>
    </citation>
    <scope>FUNCTION</scope>
</reference>
<reference key="5">
    <citation type="journal article" date="1992" name="Nature">
        <title>Crystal structure of the phosphotyrosine recognition domain SH2 of v-src complexed with tyrosine-phosphorylated peptides.</title>
        <authorList>
            <person name="Waksman G."/>
            <person name="Kominos D."/>
            <person name="Robertson S.C."/>
            <person name="Pant N."/>
            <person name="Baltimore D."/>
            <person name="Birge R.B."/>
            <person name="Cowburn D."/>
            <person name="Hanafusa H."/>
            <person name="Mayer B.J."/>
            <person name="Overduin M."/>
            <person name="Resh M.D."/>
            <person name="Rios C.B."/>
            <person name="Silverman L."/>
            <person name="Kuriyan J."/>
        </authorList>
    </citation>
    <scope>X-RAY CRYSTALLOGRAPHY (1.5 ANGSTROMS) OF 148-245 (SH2 DOMAIN)</scope>
</reference>
<reference key="6">
    <citation type="journal article" date="1993" name="Cell">
        <title>Binding of a high affinity phosphotyrosyl peptide to the Src SH2 domain: crystal structures of the complexed and peptide-free forms.</title>
        <authorList>
            <person name="Waksman G."/>
            <person name="Shoelson S.E."/>
            <person name="Pant N."/>
            <person name="Cowburn D."/>
            <person name="Kuriyan J."/>
        </authorList>
    </citation>
    <scope>X-RAY CRYSTALLOGRAPHY (2.0 ANGSTROMS) OF 146-247 (SH2 DOMAIN)</scope>
</reference>
<reference key="7">
    <citation type="journal article" date="1997" name="J. Med. Chem.">
        <title>Design, synthesis, and cocrystal structure of a nonpeptide Src SH2 domain ligand.</title>
        <authorList>
            <person name="Plummer M.S."/>
            <person name="Holland D.R."/>
            <person name="Shahripour A."/>
            <person name="Lunney E.A."/>
            <person name="Fergus J.H."/>
            <person name="Marks J.S."/>
            <person name="McConnell P."/>
            <person name="Mueller W.T."/>
            <person name="Sawyer T.K."/>
        </authorList>
    </citation>
    <scope>X-RAY CRYSTALLOGRAPHY (2.1 ANGSTROMS) OF 146-247 (SH2 DOMAIN)</scope>
</reference>
<reference key="8">
    <citation type="journal article" date="2002" name="J. Mol. Biol.">
        <title>Dissection of the energetic coupling across the Src SH2 domain-tyrosyl phosphopeptide interface.</title>
        <authorList>
            <person name="Lubman O.Y."/>
            <person name="Waksman G."/>
        </authorList>
    </citation>
    <scope>X-RAY CRYSTALLOGRAPHY (2.1 ANGSTROMS) OF 145-247 (SH2 DOMAIN)</scope>
</reference>
<reference key="9">
    <citation type="journal article" date="2002" name="J. Am. Chem. Soc.">
        <title>Calorimetric and structural studies of 1,2,3-trisubstituted cyclopropanes as conformationally constrained peptide inhibitors of Src SH2 domain binding.</title>
        <authorList>
            <person name="Davidson J.P."/>
            <person name="Lubman O.Y."/>
            <person name="Rose T."/>
            <person name="Waksman G."/>
            <person name="Martin S.F."/>
        </authorList>
    </citation>
    <scope>X-RAY CRYSTALLOGRAPHY (1.9 ANGSTROMS) OF 146-248 (SH2 DOMAIN)</scope>
</reference>
<reference key="10">
    <citation type="journal article" date="2003" name="J. Mol. Biol.">
        <title>Structural and thermodynamic basis for the interaction of the Src SH2 domain with the activated form of the PDGF beta-receptor.</title>
        <authorList>
            <person name="Lubman O.Y."/>
            <person name="Waksman G."/>
        </authorList>
    </citation>
    <scope>X-RAY CRYSTALLOGRAPHY (1.9 ANGSTROMS) OF 145-247 (SH2 DOMAIN)</scope>
</reference>
<protein>
    <recommendedName>
        <fullName>Tyrosine-protein kinase transforming protein Src</fullName>
        <ecNumber>2.7.10.2</ecNumber>
    </recommendedName>
    <alternativeName>
        <fullName>pp60v-src</fullName>
        <shortName>p60-Src</shortName>
        <shortName>v-Src</shortName>
    </alternativeName>
</protein>
<keyword id="KW-0002">3D-structure</keyword>
<keyword id="KW-0067">ATP-binding</keyword>
<keyword id="KW-0418">Kinase</keyword>
<keyword id="KW-0449">Lipoprotein</keyword>
<keyword id="KW-0519">Myristate</keyword>
<keyword id="KW-0547">Nucleotide-binding</keyword>
<keyword id="KW-0553">Oncogene</keyword>
<keyword id="KW-0597">Phosphoprotein</keyword>
<keyword id="KW-0727">SH2 domain</keyword>
<keyword id="KW-0728">SH3 domain</keyword>
<keyword id="KW-0808">Transferase</keyword>
<keyword id="KW-0829">Tyrosine-protein kinase</keyword>
<accession>P00524</accession>
<organism>
    <name type="scientific">Rous sarcoma virus subgroup A (strain Schmidt-Ruppin)</name>
    <name type="common">RSV-SR-A</name>
    <dbReference type="NCBI Taxonomy" id="269446"/>
    <lineage>
        <taxon>Viruses</taxon>
        <taxon>Riboviria</taxon>
        <taxon>Pararnavirae</taxon>
        <taxon>Artverviricota</taxon>
        <taxon>Revtraviricetes</taxon>
        <taxon>Ortervirales</taxon>
        <taxon>Retroviridae</taxon>
        <taxon>Orthoretrovirinae</taxon>
        <taxon>Alpharetrovirus</taxon>
        <taxon>Rous sarcoma virus</taxon>
    </lineage>
</organism>
<name>SRC_RSVSA</name>
<comment type="function">
    <text evidence="8">This phosphoprotein, required for both the initiation and the maintenance of neoplastic transformation, is a protein kinase that catalyzes the phosphorylation of tyrosine residues in vitro. Causes mitotic slippage in addition to cytokinesis failure in the host cell (PubMed:30135207). Phosphorylates and attenuates the activity of host CDK1, possibly causing the mitotic slippage (PubMed:30135207).</text>
</comment>
<comment type="catalytic activity">
    <reaction evidence="6">
        <text>L-tyrosyl-[protein] + ATP = O-phospho-L-tyrosyl-[protein] + ADP + H(+)</text>
        <dbReference type="Rhea" id="RHEA:10596"/>
        <dbReference type="Rhea" id="RHEA-COMP:10136"/>
        <dbReference type="Rhea" id="RHEA-COMP:20101"/>
        <dbReference type="ChEBI" id="CHEBI:15378"/>
        <dbReference type="ChEBI" id="CHEBI:30616"/>
        <dbReference type="ChEBI" id="CHEBI:46858"/>
        <dbReference type="ChEBI" id="CHEBI:61978"/>
        <dbReference type="ChEBI" id="CHEBI:456216"/>
        <dbReference type="EC" id="2.7.10.2"/>
    </reaction>
</comment>
<comment type="subunit">
    <text>Homodimer.</text>
</comment>
<comment type="PTM">
    <text evidence="9">The phosphorylated form is termed pp60v-src.</text>
</comment>
<comment type="similarity">
    <text evidence="3">Belongs to the protein kinase superfamily. Tyr protein kinase family. SRC subfamily.</text>
</comment>
<organismHost>
    <name type="scientific">Gallus gallus</name>
    <name type="common">Chicken</name>
    <dbReference type="NCBI Taxonomy" id="9031"/>
</organismHost>
<sequence length="526" mass="58984">MGSSKSKPKDPSQRRRSLEPPDSTHHGGFPASQTPNKTAAPDTHRTPSRSFGTVATEPKLFGGFNTSDTVTSPQRAGALAGGVTTFVALYDYESWIETDLSFKKGERLQIVNNTEGNWWLAHSLTTGQTGYIPSNYVAPSDSIQAEEWYFGKITRRESERLLLNPENPRGTFLVRESETTKGAYCLSVSDFDNAKGLNVKHYKIRKLDSGGFYITSRTQFSSLQQLVAYYSKHADGLCHRLTNVCPTSKPQTQGLAKDAWEIPRESLRLEVKLGQGCFGEVWMGTWNGTTRVAIKTLKPGTMSPEAFLQEAQVMKKLRHEKLVQLYAVVSEEPIYIVIEYMSKGSLLDFLKGEMGKYLRLPQLVDMAAQIASGMAYVERMNYVHRDLRAANILVGENLVCKVADFGLARLIEDNEYTARQGAKFPIKWTAPEAALYGRFTIKSDVWSFGILLTELTTKGRVPYPGMGNGEVLDRVERGYRMPCPPECPESLHDLMCQCWRRDPEERPTFEYLQAQLLPACVLEVAE</sequence>